<organism>
    <name type="scientific">Salmonella choleraesuis (strain SC-B67)</name>
    <dbReference type="NCBI Taxonomy" id="321314"/>
    <lineage>
        <taxon>Bacteria</taxon>
        <taxon>Pseudomonadati</taxon>
        <taxon>Pseudomonadota</taxon>
        <taxon>Gammaproteobacteria</taxon>
        <taxon>Enterobacterales</taxon>
        <taxon>Enterobacteriaceae</taxon>
        <taxon>Salmonella</taxon>
    </lineage>
</organism>
<comment type="function">
    <text evidence="1">Catalyzes the synthesis of GMP from XMP.</text>
</comment>
<comment type="catalytic activity">
    <reaction evidence="1">
        <text>XMP + L-glutamine + ATP + H2O = GMP + L-glutamate + AMP + diphosphate + 2 H(+)</text>
        <dbReference type="Rhea" id="RHEA:11680"/>
        <dbReference type="ChEBI" id="CHEBI:15377"/>
        <dbReference type="ChEBI" id="CHEBI:15378"/>
        <dbReference type="ChEBI" id="CHEBI:29985"/>
        <dbReference type="ChEBI" id="CHEBI:30616"/>
        <dbReference type="ChEBI" id="CHEBI:33019"/>
        <dbReference type="ChEBI" id="CHEBI:57464"/>
        <dbReference type="ChEBI" id="CHEBI:58115"/>
        <dbReference type="ChEBI" id="CHEBI:58359"/>
        <dbReference type="ChEBI" id="CHEBI:456215"/>
        <dbReference type="EC" id="6.3.5.2"/>
    </reaction>
</comment>
<comment type="pathway">
    <text evidence="1">Purine metabolism; GMP biosynthesis; GMP from XMP (L-Gln route): step 1/1.</text>
</comment>
<comment type="subunit">
    <text evidence="1">Homodimer.</text>
</comment>
<evidence type="ECO:0000255" key="1">
    <source>
        <dbReference type="HAMAP-Rule" id="MF_00344"/>
    </source>
</evidence>
<name>GUAA_SALCH</name>
<proteinExistence type="inferred from homology"/>
<dbReference type="EC" id="6.3.5.2" evidence="1"/>
<dbReference type="EMBL" id="AE017220">
    <property type="protein sequence ID" value="AAX66414.1"/>
    <property type="molecule type" value="Genomic_DNA"/>
</dbReference>
<dbReference type="RefSeq" id="WP_000138296.1">
    <property type="nucleotide sequence ID" value="NC_006905.1"/>
</dbReference>
<dbReference type="SMR" id="Q57LJ8"/>
<dbReference type="KEGG" id="sec:SCH_2508"/>
<dbReference type="HOGENOM" id="CLU_014340_0_5_6"/>
<dbReference type="UniPathway" id="UPA00189">
    <property type="reaction ID" value="UER00296"/>
</dbReference>
<dbReference type="Proteomes" id="UP000000538">
    <property type="component" value="Chromosome"/>
</dbReference>
<dbReference type="GO" id="GO:0005829">
    <property type="term" value="C:cytosol"/>
    <property type="evidence" value="ECO:0007669"/>
    <property type="project" value="TreeGrafter"/>
</dbReference>
<dbReference type="GO" id="GO:0005524">
    <property type="term" value="F:ATP binding"/>
    <property type="evidence" value="ECO:0007669"/>
    <property type="project" value="UniProtKB-UniRule"/>
</dbReference>
<dbReference type="GO" id="GO:0003921">
    <property type="term" value="F:GMP synthase activity"/>
    <property type="evidence" value="ECO:0007669"/>
    <property type="project" value="InterPro"/>
</dbReference>
<dbReference type="CDD" id="cd01742">
    <property type="entry name" value="GATase1_GMP_Synthase"/>
    <property type="match status" value="1"/>
</dbReference>
<dbReference type="CDD" id="cd01997">
    <property type="entry name" value="GMP_synthase_C"/>
    <property type="match status" value="1"/>
</dbReference>
<dbReference type="FunFam" id="3.30.300.10:FF:000002">
    <property type="entry name" value="GMP synthase [glutamine-hydrolyzing]"/>
    <property type="match status" value="1"/>
</dbReference>
<dbReference type="FunFam" id="3.40.50.620:FF:000001">
    <property type="entry name" value="GMP synthase [glutamine-hydrolyzing]"/>
    <property type="match status" value="1"/>
</dbReference>
<dbReference type="FunFam" id="3.40.50.880:FF:000001">
    <property type="entry name" value="GMP synthase [glutamine-hydrolyzing]"/>
    <property type="match status" value="1"/>
</dbReference>
<dbReference type="Gene3D" id="3.30.300.10">
    <property type="match status" value="1"/>
</dbReference>
<dbReference type="Gene3D" id="3.40.50.880">
    <property type="match status" value="1"/>
</dbReference>
<dbReference type="Gene3D" id="3.40.50.620">
    <property type="entry name" value="HUPs"/>
    <property type="match status" value="1"/>
</dbReference>
<dbReference type="HAMAP" id="MF_00344">
    <property type="entry name" value="GMP_synthase"/>
    <property type="match status" value="1"/>
</dbReference>
<dbReference type="InterPro" id="IPR029062">
    <property type="entry name" value="Class_I_gatase-like"/>
</dbReference>
<dbReference type="InterPro" id="IPR017926">
    <property type="entry name" value="GATASE"/>
</dbReference>
<dbReference type="InterPro" id="IPR001674">
    <property type="entry name" value="GMP_synth_C"/>
</dbReference>
<dbReference type="InterPro" id="IPR004739">
    <property type="entry name" value="GMP_synth_GATase"/>
</dbReference>
<dbReference type="InterPro" id="IPR022955">
    <property type="entry name" value="GMP_synthase"/>
</dbReference>
<dbReference type="InterPro" id="IPR025777">
    <property type="entry name" value="GMPS_ATP_PPase_dom"/>
</dbReference>
<dbReference type="InterPro" id="IPR022310">
    <property type="entry name" value="NAD/GMP_synthase"/>
</dbReference>
<dbReference type="InterPro" id="IPR014729">
    <property type="entry name" value="Rossmann-like_a/b/a_fold"/>
</dbReference>
<dbReference type="NCBIfam" id="TIGR00884">
    <property type="entry name" value="guaA_Cterm"/>
    <property type="match status" value="1"/>
</dbReference>
<dbReference type="NCBIfam" id="TIGR00888">
    <property type="entry name" value="guaA_Nterm"/>
    <property type="match status" value="1"/>
</dbReference>
<dbReference type="NCBIfam" id="NF000848">
    <property type="entry name" value="PRK00074.1"/>
    <property type="match status" value="1"/>
</dbReference>
<dbReference type="PANTHER" id="PTHR11922:SF2">
    <property type="entry name" value="GMP SYNTHASE [GLUTAMINE-HYDROLYZING]"/>
    <property type="match status" value="1"/>
</dbReference>
<dbReference type="PANTHER" id="PTHR11922">
    <property type="entry name" value="GMP SYNTHASE-RELATED"/>
    <property type="match status" value="1"/>
</dbReference>
<dbReference type="Pfam" id="PF00117">
    <property type="entry name" value="GATase"/>
    <property type="match status" value="1"/>
</dbReference>
<dbReference type="Pfam" id="PF00958">
    <property type="entry name" value="GMP_synt_C"/>
    <property type="match status" value="1"/>
</dbReference>
<dbReference type="Pfam" id="PF02540">
    <property type="entry name" value="NAD_synthase"/>
    <property type="match status" value="1"/>
</dbReference>
<dbReference type="PRINTS" id="PR00097">
    <property type="entry name" value="ANTSNTHASEII"/>
</dbReference>
<dbReference type="PRINTS" id="PR00099">
    <property type="entry name" value="CPSGATASE"/>
</dbReference>
<dbReference type="PRINTS" id="PR00096">
    <property type="entry name" value="GATASE"/>
</dbReference>
<dbReference type="SUPFAM" id="SSF52402">
    <property type="entry name" value="Adenine nucleotide alpha hydrolases-like"/>
    <property type="match status" value="1"/>
</dbReference>
<dbReference type="SUPFAM" id="SSF52317">
    <property type="entry name" value="Class I glutamine amidotransferase-like"/>
    <property type="match status" value="1"/>
</dbReference>
<dbReference type="SUPFAM" id="SSF54810">
    <property type="entry name" value="GMP synthetase C-terminal dimerisation domain"/>
    <property type="match status" value="1"/>
</dbReference>
<dbReference type="PROSITE" id="PS51273">
    <property type="entry name" value="GATASE_TYPE_1"/>
    <property type="match status" value="1"/>
</dbReference>
<dbReference type="PROSITE" id="PS51553">
    <property type="entry name" value="GMPS_ATP_PPASE"/>
    <property type="match status" value="1"/>
</dbReference>
<protein>
    <recommendedName>
        <fullName evidence="1">GMP synthase [glutamine-hydrolyzing]</fullName>
        <ecNumber evidence="1">6.3.5.2</ecNumber>
    </recommendedName>
    <alternativeName>
        <fullName evidence="1">GMP synthetase</fullName>
    </alternativeName>
    <alternativeName>
        <fullName evidence="1">Glutamine amidotransferase</fullName>
    </alternativeName>
</protein>
<accession>Q57LJ8</accession>
<reference key="1">
    <citation type="journal article" date="2005" name="Nucleic Acids Res.">
        <title>The genome sequence of Salmonella enterica serovar Choleraesuis, a highly invasive and resistant zoonotic pathogen.</title>
        <authorList>
            <person name="Chiu C.-H."/>
            <person name="Tang P."/>
            <person name="Chu C."/>
            <person name="Hu S."/>
            <person name="Bao Q."/>
            <person name="Yu J."/>
            <person name="Chou Y.-Y."/>
            <person name="Wang H.-S."/>
            <person name="Lee Y.-S."/>
        </authorList>
    </citation>
    <scope>NUCLEOTIDE SEQUENCE [LARGE SCALE GENOMIC DNA]</scope>
    <source>
        <strain>SC-B67</strain>
    </source>
</reference>
<keyword id="KW-0067">ATP-binding</keyword>
<keyword id="KW-0315">Glutamine amidotransferase</keyword>
<keyword id="KW-0332">GMP biosynthesis</keyword>
<keyword id="KW-0436">Ligase</keyword>
<keyword id="KW-0547">Nucleotide-binding</keyword>
<keyword id="KW-0658">Purine biosynthesis</keyword>
<sequence length="525" mass="58700">MTENIHKHRILILDFGSQYTQLVARRVRELGVYCELWAWDVTEAQIRDFNPSGIILSGGPESTTEENSPRAPQYVFEAGVPVFGVCYGMQTMAMQLGGHVEGSNEREFGYAQVEVLTDSALVRGIEDSLTADGKPLLDVWMSHGDKVTAIPSDFVTVASTESCPFAIMANEEKRFYGVQFHPEVTHTRQGMRMLERFVRDICQCEALWTPAKIIDDAVARIREQVGDDKVILGLSGGVDSSVTAMLLHRAIGKNLTCVFVDNGLLRLNEAEQVMDMFGDHFGLNIVHVPAEERFLSALAGENDPEAKRKIIGRVFVEVFDEEALKLEDVKWLAQGTIYPDVIESAASATGKAHVIKSHHNVGGLPKEMKMGLVEPLKELFKDEVRKIGLELGLPYDMLYRHPFPGPGLGVRVLGEVKKEYCDLLRRADAIFIEELRKADLYDKVSQAFTVFLPVRSVGVMGDGRKYDWVVSLRAVETIDFMTAHWAHLPYDFLGRVSNRIINEVNGISRVVYDISGKPPATIEWE</sequence>
<gene>
    <name evidence="1" type="primary">guaA</name>
    <name type="ordered locus">SCH_2508</name>
</gene>
<feature type="chain" id="PRO_0000229465" description="GMP synthase [glutamine-hydrolyzing]">
    <location>
        <begin position="1"/>
        <end position="525"/>
    </location>
</feature>
<feature type="domain" description="Glutamine amidotransferase type-1" evidence="1">
    <location>
        <begin position="9"/>
        <end position="207"/>
    </location>
</feature>
<feature type="domain" description="GMPS ATP-PPase" evidence="1">
    <location>
        <begin position="208"/>
        <end position="400"/>
    </location>
</feature>
<feature type="active site" description="Nucleophile" evidence="1">
    <location>
        <position position="86"/>
    </location>
</feature>
<feature type="active site" evidence="1">
    <location>
        <position position="181"/>
    </location>
</feature>
<feature type="active site" evidence="1">
    <location>
        <position position="183"/>
    </location>
</feature>
<feature type="binding site" evidence="1">
    <location>
        <begin position="235"/>
        <end position="241"/>
    </location>
    <ligand>
        <name>ATP</name>
        <dbReference type="ChEBI" id="CHEBI:30616"/>
    </ligand>
</feature>